<proteinExistence type="inferred from homology"/>
<evidence type="ECO:0000255" key="1">
    <source>
        <dbReference type="HAMAP-Rule" id="MF_00028"/>
    </source>
</evidence>
<protein>
    <recommendedName>
        <fullName evidence="1">Cobyric acid synthase</fullName>
    </recommendedName>
</protein>
<organism>
    <name type="scientific">Chlorobium phaeobacteroides (strain DSM 266 / SMG 266 / 2430)</name>
    <dbReference type="NCBI Taxonomy" id="290317"/>
    <lineage>
        <taxon>Bacteria</taxon>
        <taxon>Pseudomonadati</taxon>
        <taxon>Chlorobiota</taxon>
        <taxon>Chlorobiia</taxon>
        <taxon>Chlorobiales</taxon>
        <taxon>Chlorobiaceae</taxon>
        <taxon>Chlorobium/Pelodictyon group</taxon>
        <taxon>Chlorobium</taxon>
    </lineage>
</organism>
<keyword id="KW-0169">Cobalamin biosynthesis</keyword>
<keyword id="KW-0315">Glutamine amidotransferase</keyword>
<keyword id="KW-1185">Reference proteome</keyword>
<accession>A1BFI0</accession>
<gene>
    <name evidence="1" type="primary">cobQ</name>
    <name type="ordered locus">Cpha266_1117</name>
</gene>
<dbReference type="EMBL" id="CP000492">
    <property type="protein sequence ID" value="ABL65157.1"/>
    <property type="molecule type" value="Genomic_DNA"/>
</dbReference>
<dbReference type="RefSeq" id="WP_011744983.1">
    <property type="nucleotide sequence ID" value="NC_008639.1"/>
</dbReference>
<dbReference type="SMR" id="A1BFI0"/>
<dbReference type="STRING" id="290317.Cpha266_1117"/>
<dbReference type="KEGG" id="cph:Cpha266_1117"/>
<dbReference type="eggNOG" id="COG1492">
    <property type="taxonomic scope" value="Bacteria"/>
</dbReference>
<dbReference type="HOGENOM" id="CLU_019250_2_2_10"/>
<dbReference type="OrthoDB" id="9808302at2"/>
<dbReference type="UniPathway" id="UPA00148"/>
<dbReference type="Proteomes" id="UP000008701">
    <property type="component" value="Chromosome"/>
</dbReference>
<dbReference type="GO" id="GO:0015420">
    <property type="term" value="F:ABC-type vitamin B12 transporter activity"/>
    <property type="evidence" value="ECO:0007669"/>
    <property type="project" value="UniProtKB-UniRule"/>
</dbReference>
<dbReference type="GO" id="GO:0003824">
    <property type="term" value="F:catalytic activity"/>
    <property type="evidence" value="ECO:0007669"/>
    <property type="project" value="InterPro"/>
</dbReference>
<dbReference type="GO" id="GO:0009236">
    <property type="term" value="P:cobalamin biosynthetic process"/>
    <property type="evidence" value="ECO:0007669"/>
    <property type="project" value="UniProtKB-UniRule"/>
</dbReference>
<dbReference type="CDD" id="cd05389">
    <property type="entry name" value="CobQ_N"/>
    <property type="match status" value="1"/>
</dbReference>
<dbReference type="CDD" id="cd01750">
    <property type="entry name" value="GATase1_CobQ"/>
    <property type="match status" value="1"/>
</dbReference>
<dbReference type="Gene3D" id="3.40.50.880">
    <property type="match status" value="1"/>
</dbReference>
<dbReference type="Gene3D" id="3.40.50.300">
    <property type="entry name" value="P-loop containing nucleotide triphosphate hydrolases"/>
    <property type="match status" value="1"/>
</dbReference>
<dbReference type="HAMAP" id="MF_00028">
    <property type="entry name" value="CobQ"/>
    <property type="match status" value="1"/>
</dbReference>
<dbReference type="InterPro" id="IPR029062">
    <property type="entry name" value="Class_I_gatase-like"/>
</dbReference>
<dbReference type="InterPro" id="IPR002586">
    <property type="entry name" value="CobQ/CobB/MinD/ParA_Nub-bd_dom"/>
</dbReference>
<dbReference type="InterPro" id="IPR033949">
    <property type="entry name" value="CobQ_GATase1"/>
</dbReference>
<dbReference type="InterPro" id="IPR047045">
    <property type="entry name" value="CobQ_N"/>
</dbReference>
<dbReference type="InterPro" id="IPR004459">
    <property type="entry name" value="CobQ_synth"/>
</dbReference>
<dbReference type="InterPro" id="IPR011698">
    <property type="entry name" value="GATase_3"/>
</dbReference>
<dbReference type="InterPro" id="IPR027417">
    <property type="entry name" value="P-loop_NTPase"/>
</dbReference>
<dbReference type="NCBIfam" id="TIGR00313">
    <property type="entry name" value="cobQ"/>
    <property type="match status" value="1"/>
</dbReference>
<dbReference type="NCBIfam" id="NF001989">
    <property type="entry name" value="PRK00784.1"/>
    <property type="match status" value="1"/>
</dbReference>
<dbReference type="PANTHER" id="PTHR21343:SF1">
    <property type="entry name" value="COBYRIC ACID SYNTHASE"/>
    <property type="match status" value="1"/>
</dbReference>
<dbReference type="PANTHER" id="PTHR21343">
    <property type="entry name" value="DETHIOBIOTIN SYNTHETASE"/>
    <property type="match status" value="1"/>
</dbReference>
<dbReference type="Pfam" id="PF01656">
    <property type="entry name" value="CbiA"/>
    <property type="match status" value="1"/>
</dbReference>
<dbReference type="Pfam" id="PF07685">
    <property type="entry name" value="GATase_3"/>
    <property type="match status" value="1"/>
</dbReference>
<dbReference type="SUPFAM" id="SSF52317">
    <property type="entry name" value="Class I glutamine amidotransferase-like"/>
    <property type="match status" value="1"/>
</dbReference>
<dbReference type="SUPFAM" id="SSF52540">
    <property type="entry name" value="P-loop containing nucleoside triphosphate hydrolases"/>
    <property type="match status" value="1"/>
</dbReference>
<dbReference type="PROSITE" id="PS51274">
    <property type="entry name" value="GATASE_COBBQ"/>
    <property type="match status" value="1"/>
</dbReference>
<feature type="chain" id="PRO_0000332327" description="Cobyric acid synthase">
    <location>
        <begin position="1"/>
        <end position="505"/>
    </location>
</feature>
<feature type="domain" description="GATase cobBQ-type" evidence="1">
    <location>
        <begin position="260"/>
        <end position="453"/>
    </location>
</feature>
<feature type="active site" description="Nucleophile" evidence="1">
    <location>
        <position position="341"/>
    </location>
</feature>
<feature type="active site" evidence="1">
    <location>
        <position position="445"/>
    </location>
</feature>
<name>COBQ_CHLPD</name>
<reference key="1">
    <citation type="submission" date="2006-12" db="EMBL/GenBank/DDBJ databases">
        <title>Complete sequence of Chlorobium phaeobacteroides DSM 266.</title>
        <authorList>
            <consortium name="US DOE Joint Genome Institute"/>
            <person name="Copeland A."/>
            <person name="Lucas S."/>
            <person name="Lapidus A."/>
            <person name="Barry K."/>
            <person name="Detter J.C."/>
            <person name="Glavina del Rio T."/>
            <person name="Hammon N."/>
            <person name="Israni S."/>
            <person name="Pitluck S."/>
            <person name="Goltsman E."/>
            <person name="Schmutz J."/>
            <person name="Larimer F."/>
            <person name="Land M."/>
            <person name="Hauser L."/>
            <person name="Mikhailova N."/>
            <person name="Li T."/>
            <person name="Overmann J."/>
            <person name="Bryant D.A."/>
            <person name="Richardson P."/>
        </authorList>
    </citation>
    <scope>NUCLEOTIDE SEQUENCE [LARGE SCALE GENOMIC DNA]</scope>
    <source>
        <strain>DSM 266 / SMG 266 / 2430</strain>
    </source>
</reference>
<comment type="function">
    <text evidence="1">Catalyzes amidations at positions B, D, E, and G on adenosylcobyrinic A,C-diamide. NH(2) groups are provided by glutamine, and one molecule of ATP is hydrogenolyzed for each amidation.</text>
</comment>
<comment type="pathway">
    <text evidence="1">Cofactor biosynthesis; adenosylcobalamin biosynthesis.</text>
</comment>
<comment type="similarity">
    <text evidence="1">Belongs to the CobB/CobQ family. CobQ subfamily.</text>
</comment>
<sequence>MVNSSPVPGALAIFGTASDVGKSIVATALCRMFSNAGIDVAPYKAQNMSNNSGVTPDGCEIGRAQIAQAEAARVVPTADMNPVLLKPNSDTGAQIVLQGKVCSTETAKGYFLDTSLWAEAARKSLDQLMQRHELVVIEGAGSCAEMNLYDRDFVNFRTARISGAPVILVADIDRGGVFAQVVGTLAVLPPEDRALVKGVIINRFRGDIDLFRDGVKLIETLAGIPVLGVIPYFRGFRIDAEDAVPLSSKVDPSGAPEKGRIAVAAIYFPHISNFTDLSPLELDPKVELHYLHFPRSLRGYQALILPGTKNVRGDLDWLTSLGWAEKIREFRRDGGLIMGICGGYQMLGATIADPSGVEGEPGESAGLGMLPVHTVLEEEKCLSNAIGNIQGESIAVSGYEIHMGRTTSNGDCSSFLRVTARNNRPADDVDGVITPDGKVIGTYFHGIIDEPEVRCWFLRQIDPAYTPDAEERGRQESYDLLADHFSGYLDIPKLYEIIQRPCPNP</sequence>